<accession>Q1QME1</accession>
<evidence type="ECO:0000255" key="1">
    <source>
        <dbReference type="HAMAP-Rule" id="MF_00060"/>
    </source>
</evidence>
<comment type="function">
    <text evidence="1">Nucleotidase that shows phosphatase activity on nucleoside 5'-monophosphates.</text>
</comment>
<comment type="catalytic activity">
    <reaction evidence="1">
        <text>a ribonucleoside 5'-phosphate + H2O = a ribonucleoside + phosphate</text>
        <dbReference type="Rhea" id="RHEA:12484"/>
        <dbReference type="ChEBI" id="CHEBI:15377"/>
        <dbReference type="ChEBI" id="CHEBI:18254"/>
        <dbReference type="ChEBI" id="CHEBI:43474"/>
        <dbReference type="ChEBI" id="CHEBI:58043"/>
        <dbReference type="EC" id="3.1.3.5"/>
    </reaction>
</comment>
<comment type="cofactor">
    <cofactor evidence="1">
        <name>a divalent metal cation</name>
        <dbReference type="ChEBI" id="CHEBI:60240"/>
    </cofactor>
    <text evidence="1">Binds 1 divalent metal cation per subunit.</text>
</comment>
<comment type="subcellular location">
    <subcellularLocation>
        <location evidence="1">Cytoplasm</location>
    </subcellularLocation>
</comment>
<comment type="similarity">
    <text evidence="1">Belongs to the SurE nucleotidase family.</text>
</comment>
<organism>
    <name type="scientific">Nitrobacter hamburgensis (strain DSM 10229 / NCIMB 13809 / X14)</name>
    <dbReference type="NCBI Taxonomy" id="323097"/>
    <lineage>
        <taxon>Bacteria</taxon>
        <taxon>Pseudomonadati</taxon>
        <taxon>Pseudomonadota</taxon>
        <taxon>Alphaproteobacteria</taxon>
        <taxon>Hyphomicrobiales</taxon>
        <taxon>Nitrobacteraceae</taxon>
        <taxon>Nitrobacter</taxon>
    </lineage>
</organism>
<sequence length="255" mass="27669">MRILCTNDDGINAPGLEIIEQIAKDLSDDVWVVAPEYDQSGVSHSLSLNDPLRLREIGPRHFAVKGTPTDCVIMGSRHILGEKGPDLVLSGVNRGRNLAEDVVYSGTIAGALEGTMLGLPSFALSQEFSMETGDRPVWETARKFGPQILRKVIDVGIPKNTVVNINFPACAPEQVVGVLVTRMGKRNLGFLKIDERRDGRGNPYFWIGFEKADVVDTPAAGTDLAAIAARCVSVTPLRLDRTDDAFVEVLTATLK</sequence>
<protein>
    <recommendedName>
        <fullName evidence="1">5'-nucleotidase SurE</fullName>
        <ecNumber evidence="1">3.1.3.5</ecNumber>
    </recommendedName>
    <alternativeName>
        <fullName evidence="1">Nucleoside 5'-monophosphate phosphohydrolase</fullName>
    </alternativeName>
</protein>
<feature type="chain" id="PRO_1000007754" description="5'-nucleotidase SurE">
    <location>
        <begin position="1"/>
        <end position="255"/>
    </location>
</feature>
<feature type="binding site" evidence="1">
    <location>
        <position position="8"/>
    </location>
    <ligand>
        <name>a divalent metal cation</name>
        <dbReference type="ChEBI" id="CHEBI:60240"/>
    </ligand>
</feature>
<feature type="binding site" evidence="1">
    <location>
        <position position="9"/>
    </location>
    <ligand>
        <name>a divalent metal cation</name>
        <dbReference type="ChEBI" id="CHEBI:60240"/>
    </ligand>
</feature>
<feature type="binding site" evidence="1">
    <location>
        <position position="40"/>
    </location>
    <ligand>
        <name>a divalent metal cation</name>
        <dbReference type="ChEBI" id="CHEBI:60240"/>
    </ligand>
</feature>
<feature type="binding site" evidence="1">
    <location>
        <position position="93"/>
    </location>
    <ligand>
        <name>a divalent metal cation</name>
        <dbReference type="ChEBI" id="CHEBI:60240"/>
    </ligand>
</feature>
<dbReference type="EC" id="3.1.3.5" evidence="1"/>
<dbReference type="EMBL" id="CP000319">
    <property type="protein sequence ID" value="ABE62606.1"/>
    <property type="molecule type" value="Genomic_DNA"/>
</dbReference>
<dbReference type="RefSeq" id="WP_011510288.1">
    <property type="nucleotide sequence ID" value="NC_007964.1"/>
</dbReference>
<dbReference type="SMR" id="Q1QME1"/>
<dbReference type="STRING" id="323097.Nham_1792"/>
<dbReference type="KEGG" id="nha:Nham_1792"/>
<dbReference type="eggNOG" id="COG0496">
    <property type="taxonomic scope" value="Bacteria"/>
</dbReference>
<dbReference type="HOGENOM" id="CLU_045192_1_2_5"/>
<dbReference type="OrthoDB" id="9780815at2"/>
<dbReference type="Proteomes" id="UP000001953">
    <property type="component" value="Chromosome"/>
</dbReference>
<dbReference type="GO" id="GO:0005737">
    <property type="term" value="C:cytoplasm"/>
    <property type="evidence" value="ECO:0007669"/>
    <property type="project" value="UniProtKB-SubCell"/>
</dbReference>
<dbReference type="GO" id="GO:0008254">
    <property type="term" value="F:3'-nucleotidase activity"/>
    <property type="evidence" value="ECO:0007669"/>
    <property type="project" value="TreeGrafter"/>
</dbReference>
<dbReference type="GO" id="GO:0008253">
    <property type="term" value="F:5'-nucleotidase activity"/>
    <property type="evidence" value="ECO:0007669"/>
    <property type="project" value="UniProtKB-UniRule"/>
</dbReference>
<dbReference type="GO" id="GO:0004309">
    <property type="term" value="F:exopolyphosphatase activity"/>
    <property type="evidence" value="ECO:0007669"/>
    <property type="project" value="TreeGrafter"/>
</dbReference>
<dbReference type="GO" id="GO:0046872">
    <property type="term" value="F:metal ion binding"/>
    <property type="evidence" value="ECO:0007669"/>
    <property type="project" value="UniProtKB-UniRule"/>
</dbReference>
<dbReference type="GO" id="GO:0000166">
    <property type="term" value="F:nucleotide binding"/>
    <property type="evidence" value="ECO:0007669"/>
    <property type="project" value="UniProtKB-KW"/>
</dbReference>
<dbReference type="FunFam" id="3.40.1210.10:FF:000001">
    <property type="entry name" value="5'/3'-nucleotidase SurE"/>
    <property type="match status" value="1"/>
</dbReference>
<dbReference type="Gene3D" id="3.40.1210.10">
    <property type="entry name" value="Survival protein SurE-like phosphatase/nucleotidase"/>
    <property type="match status" value="1"/>
</dbReference>
<dbReference type="HAMAP" id="MF_00060">
    <property type="entry name" value="SurE"/>
    <property type="match status" value="1"/>
</dbReference>
<dbReference type="InterPro" id="IPR030048">
    <property type="entry name" value="SurE"/>
</dbReference>
<dbReference type="InterPro" id="IPR002828">
    <property type="entry name" value="SurE-like_Pase/nucleotidase"/>
</dbReference>
<dbReference type="InterPro" id="IPR036523">
    <property type="entry name" value="SurE-like_sf"/>
</dbReference>
<dbReference type="NCBIfam" id="NF001490">
    <property type="entry name" value="PRK00346.1-4"/>
    <property type="match status" value="1"/>
</dbReference>
<dbReference type="NCBIfam" id="TIGR00087">
    <property type="entry name" value="surE"/>
    <property type="match status" value="1"/>
</dbReference>
<dbReference type="PANTHER" id="PTHR30457">
    <property type="entry name" value="5'-NUCLEOTIDASE SURE"/>
    <property type="match status" value="1"/>
</dbReference>
<dbReference type="PANTHER" id="PTHR30457:SF12">
    <property type="entry name" value="5'_3'-NUCLEOTIDASE SURE"/>
    <property type="match status" value="1"/>
</dbReference>
<dbReference type="Pfam" id="PF01975">
    <property type="entry name" value="SurE"/>
    <property type="match status" value="1"/>
</dbReference>
<dbReference type="SUPFAM" id="SSF64167">
    <property type="entry name" value="SurE-like"/>
    <property type="match status" value="1"/>
</dbReference>
<keyword id="KW-0963">Cytoplasm</keyword>
<keyword id="KW-0378">Hydrolase</keyword>
<keyword id="KW-0479">Metal-binding</keyword>
<keyword id="KW-0547">Nucleotide-binding</keyword>
<keyword id="KW-1185">Reference proteome</keyword>
<name>SURE_NITHX</name>
<reference key="1">
    <citation type="submission" date="2006-03" db="EMBL/GenBank/DDBJ databases">
        <title>Complete sequence of chromosome of Nitrobacter hamburgensis X14.</title>
        <authorList>
            <consortium name="US DOE Joint Genome Institute"/>
            <person name="Copeland A."/>
            <person name="Lucas S."/>
            <person name="Lapidus A."/>
            <person name="Barry K."/>
            <person name="Detter J.C."/>
            <person name="Glavina del Rio T."/>
            <person name="Hammon N."/>
            <person name="Israni S."/>
            <person name="Dalin E."/>
            <person name="Tice H."/>
            <person name="Pitluck S."/>
            <person name="Chain P."/>
            <person name="Malfatti S."/>
            <person name="Shin M."/>
            <person name="Vergez L."/>
            <person name="Schmutz J."/>
            <person name="Larimer F."/>
            <person name="Land M."/>
            <person name="Hauser L."/>
            <person name="Kyrpides N."/>
            <person name="Ivanova N."/>
            <person name="Ward B."/>
            <person name="Arp D."/>
            <person name="Klotz M."/>
            <person name="Stein L."/>
            <person name="O'Mullan G."/>
            <person name="Starkenburg S."/>
            <person name="Sayavedra L."/>
            <person name="Poret-Peterson A.T."/>
            <person name="Gentry M.E."/>
            <person name="Bruce D."/>
            <person name="Richardson P."/>
        </authorList>
    </citation>
    <scope>NUCLEOTIDE SEQUENCE [LARGE SCALE GENOMIC DNA]</scope>
    <source>
        <strain>DSM 10229 / NCIMB 13809 / X14</strain>
    </source>
</reference>
<gene>
    <name evidence="1" type="primary">surE</name>
    <name type="ordered locus">Nham_1792</name>
</gene>
<proteinExistence type="inferred from homology"/>